<reference key="1">
    <citation type="journal article" date="2000" name="Nature">
        <title>The genome sequence of the food-borne pathogen Campylobacter jejuni reveals hypervariable sequences.</title>
        <authorList>
            <person name="Parkhill J."/>
            <person name="Wren B.W."/>
            <person name="Mungall K.L."/>
            <person name="Ketley J.M."/>
            <person name="Churcher C.M."/>
            <person name="Basham D."/>
            <person name="Chillingworth T."/>
            <person name="Davies R.M."/>
            <person name="Feltwell T."/>
            <person name="Holroyd S."/>
            <person name="Jagels K."/>
            <person name="Karlyshev A.V."/>
            <person name="Moule S."/>
            <person name="Pallen M.J."/>
            <person name="Penn C.W."/>
            <person name="Quail M.A."/>
            <person name="Rajandream M.A."/>
            <person name="Rutherford K.M."/>
            <person name="van Vliet A.H.M."/>
            <person name="Whitehead S."/>
            <person name="Barrell B.G."/>
        </authorList>
    </citation>
    <scope>NUCLEOTIDE SEQUENCE [LARGE SCALE GENOMIC DNA]</scope>
    <source>
        <strain>ATCC 700819 / NCTC 11168</strain>
    </source>
</reference>
<feature type="chain" id="PRO_0000118618" description="NADH-quinone oxidoreductase subunit D">
    <location>
        <begin position="1"/>
        <end position="408"/>
    </location>
</feature>
<dbReference type="EC" id="7.1.1.-" evidence="1"/>
<dbReference type="EMBL" id="AL111168">
    <property type="protein sequence ID" value="CAL35673.1"/>
    <property type="molecule type" value="Genomic_DNA"/>
</dbReference>
<dbReference type="PIR" id="F81252">
    <property type="entry name" value="F81252"/>
</dbReference>
<dbReference type="RefSeq" id="WP_002864417.1">
    <property type="nucleotide sequence ID" value="NZ_SZUC01000002.1"/>
</dbReference>
<dbReference type="RefSeq" id="YP_002344945.1">
    <property type="nucleotide sequence ID" value="NC_002163.1"/>
</dbReference>
<dbReference type="SMR" id="Q9PM99"/>
<dbReference type="IntAct" id="Q9PM99">
    <property type="interactions" value="10"/>
</dbReference>
<dbReference type="STRING" id="192222.Cj1576c"/>
<dbReference type="TCDB" id="3.D.1.7.1">
    <property type="family name" value="the h+ or na+-translocating nadh dehydrogenase (ndh) family"/>
</dbReference>
<dbReference type="PaxDb" id="192222-Cj1576c"/>
<dbReference type="EnsemblBacteria" id="CAL35673">
    <property type="protein sequence ID" value="CAL35673"/>
    <property type="gene ID" value="Cj1576c"/>
</dbReference>
<dbReference type="GeneID" id="905846"/>
<dbReference type="KEGG" id="cje:Cj1576c"/>
<dbReference type="PATRIC" id="fig|192222.6.peg.1552"/>
<dbReference type="eggNOG" id="COG0649">
    <property type="taxonomic scope" value="Bacteria"/>
</dbReference>
<dbReference type="HOGENOM" id="CLU_015134_1_2_7"/>
<dbReference type="OrthoDB" id="9801496at2"/>
<dbReference type="Proteomes" id="UP000000799">
    <property type="component" value="Chromosome"/>
</dbReference>
<dbReference type="GO" id="GO:0005886">
    <property type="term" value="C:plasma membrane"/>
    <property type="evidence" value="ECO:0007669"/>
    <property type="project" value="UniProtKB-SubCell"/>
</dbReference>
<dbReference type="GO" id="GO:0051287">
    <property type="term" value="F:NAD binding"/>
    <property type="evidence" value="ECO:0007669"/>
    <property type="project" value="InterPro"/>
</dbReference>
<dbReference type="GO" id="GO:0050136">
    <property type="term" value="F:NADH:ubiquinone reductase (non-electrogenic) activity"/>
    <property type="evidence" value="ECO:0007669"/>
    <property type="project" value="UniProtKB-UniRule"/>
</dbReference>
<dbReference type="GO" id="GO:0048038">
    <property type="term" value="F:quinone binding"/>
    <property type="evidence" value="ECO:0007669"/>
    <property type="project" value="UniProtKB-KW"/>
</dbReference>
<dbReference type="Gene3D" id="1.10.645.10">
    <property type="entry name" value="Cytochrome-c3 Hydrogenase, chain B"/>
    <property type="match status" value="1"/>
</dbReference>
<dbReference type="HAMAP" id="MF_01358">
    <property type="entry name" value="NDH1_NuoD"/>
    <property type="match status" value="1"/>
</dbReference>
<dbReference type="InterPro" id="IPR001135">
    <property type="entry name" value="NADH_Q_OxRdtase_suD"/>
</dbReference>
<dbReference type="InterPro" id="IPR022885">
    <property type="entry name" value="NDH1_su_D/H"/>
</dbReference>
<dbReference type="InterPro" id="IPR029014">
    <property type="entry name" value="NiFe-Hase_large"/>
</dbReference>
<dbReference type="NCBIfam" id="TIGR01962">
    <property type="entry name" value="NuoD"/>
    <property type="match status" value="1"/>
</dbReference>
<dbReference type="NCBIfam" id="NF004739">
    <property type="entry name" value="PRK06075.1"/>
    <property type="match status" value="1"/>
</dbReference>
<dbReference type="PANTHER" id="PTHR11993:SF10">
    <property type="entry name" value="NADH DEHYDROGENASE [UBIQUINONE] IRON-SULFUR PROTEIN 2, MITOCHONDRIAL"/>
    <property type="match status" value="1"/>
</dbReference>
<dbReference type="PANTHER" id="PTHR11993">
    <property type="entry name" value="NADH-UBIQUINONE OXIDOREDUCTASE 49 KDA SUBUNIT"/>
    <property type="match status" value="1"/>
</dbReference>
<dbReference type="Pfam" id="PF00346">
    <property type="entry name" value="Complex1_49kDa"/>
    <property type="match status" value="1"/>
</dbReference>
<dbReference type="SUPFAM" id="SSF56762">
    <property type="entry name" value="HydB/Nqo4-like"/>
    <property type="match status" value="1"/>
</dbReference>
<gene>
    <name evidence="1" type="primary">nuoD</name>
    <name type="ordered locus">Cj1576c</name>
</gene>
<proteinExistence type="inferred from homology"/>
<evidence type="ECO:0000255" key="1">
    <source>
        <dbReference type="HAMAP-Rule" id="MF_01358"/>
    </source>
</evidence>
<comment type="function">
    <text evidence="1">NDH-1 shuttles electrons from NADH, via FMN and iron-sulfur (Fe-S) centers, to quinones in the respiratory chain. The immediate electron acceptor for the enzyme in this species is believed to be ubiquinone. Couples the redox reaction to proton translocation (for every two electrons transferred, four hydrogen ions are translocated across the cytoplasmic membrane), and thus conserves the redox energy in a proton gradient.</text>
</comment>
<comment type="catalytic activity">
    <reaction evidence="1">
        <text>a quinone + NADH + 5 H(+)(in) = a quinol + NAD(+) + 4 H(+)(out)</text>
        <dbReference type="Rhea" id="RHEA:57888"/>
        <dbReference type="ChEBI" id="CHEBI:15378"/>
        <dbReference type="ChEBI" id="CHEBI:24646"/>
        <dbReference type="ChEBI" id="CHEBI:57540"/>
        <dbReference type="ChEBI" id="CHEBI:57945"/>
        <dbReference type="ChEBI" id="CHEBI:132124"/>
    </reaction>
</comment>
<comment type="subunit">
    <text evidence="1">NDH-1 is composed of 14 different subunits. Subunits NuoB, C, D, E, F, and G constitute the peripheral sector of the complex.</text>
</comment>
<comment type="subcellular location">
    <subcellularLocation>
        <location evidence="1">Cell inner membrane</location>
        <topology evidence="1">Peripheral membrane protein</topology>
        <orientation evidence="1">Cytoplasmic side</orientation>
    </subcellularLocation>
</comment>
<comment type="similarity">
    <text evidence="1">Belongs to the complex I 49 kDa subunit family.</text>
</comment>
<name>NUOD_CAMJE</name>
<organism>
    <name type="scientific">Campylobacter jejuni subsp. jejuni serotype O:2 (strain ATCC 700819 / NCTC 11168)</name>
    <dbReference type="NCBI Taxonomy" id="192222"/>
    <lineage>
        <taxon>Bacteria</taxon>
        <taxon>Pseudomonadati</taxon>
        <taxon>Campylobacterota</taxon>
        <taxon>Epsilonproteobacteria</taxon>
        <taxon>Campylobacterales</taxon>
        <taxon>Campylobacteraceae</taxon>
        <taxon>Campylobacter</taxon>
    </lineage>
</organism>
<protein>
    <recommendedName>
        <fullName evidence="1">NADH-quinone oxidoreductase subunit D</fullName>
        <ecNumber evidence="1">7.1.1.-</ecNumber>
    </recommendedName>
    <alternativeName>
        <fullName evidence="1">NADH dehydrogenase I subunit D</fullName>
    </alternativeName>
    <alternativeName>
        <fullName evidence="1">NDH-1 subunit D</fullName>
    </alternativeName>
</protein>
<accession>Q9PM99</accession>
<accession>Q0P852</accession>
<keyword id="KW-0997">Cell inner membrane</keyword>
<keyword id="KW-1003">Cell membrane</keyword>
<keyword id="KW-0472">Membrane</keyword>
<keyword id="KW-0520">NAD</keyword>
<keyword id="KW-0874">Quinone</keyword>
<keyword id="KW-1185">Reference proteome</keyword>
<keyword id="KW-1278">Translocase</keyword>
<keyword id="KW-0813">Transport</keyword>
<keyword id="KW-0830">Ubiquinone</keyword>
<sequence>MQIPSKLKPYYENIAFEQEDSKMIINLGPQHPSAHGNLRLILELDGEQVVKARPCIGYMHRGMEKMAENMIYQEFIPTTDRMDYIAASANNYAYCAAVEKLCGLEIPRRAAVIRMILLELNRITSHLLWLATHALDIGAMSVFLYCFREREYVLDLIEKYCGARLTHSSMRIGGVMLDLPENYLEEMLAFCDKFPNDLKDYEDLLDDNRIWRLRTENVGVVTKEQALNWGCTGVMLRGSGIKYDIRKEEPYLLYNEVEFGVPYATQGDSYARYKVYMQEFRESLKILRQCAMLYKDTSPEILATHPEYVSASKEQILTQNYSLMQHFVLITQGLKPPKGEVYVPTESPKGELGFFIHSDGTGRPYRLKARTPSYWHCAFFEEMLVGTYLADVVAIMGNVNIVLGEIDR</sequence>